<name>PROB_STRT1</name>
<feature type="chain" id="PRO_0000109739" description="Glutamate 5-kinase">
    <location>
        <begin position="1"/>
        <end position="267"/>
    </location>
</feature>
<feature type="binding site" evidence="1">
    <location>
        <position position="14"/>
    </location>
    <ligand>
        <name>ATP</name>
        <dbReference type="ChEBI" id="CHEBI:30616"/>
    </ligand>
</feature>
<feature type="binding site" evidence="1">
    <location>
        <position position="54"/>
    </location>
    <ligand>
        <name>substrate</name>
    </ligand>
</feature>
<feature type="binding site" evidence="1">
    <location>
        <position position="141"/>
    </location>
    <ligand>
        <name>substrate</name>
    </ligand>
</feature>
<feature type="binding site" evidence="1">
    <location>
        <position position="157"/>
    </location>
    <ligand>
        <name>substrate</name>
    </ligand>
</feature>
<feature type="binding site" evidence="1">
    <location>
        <begin position="177"/>
        <end position="178"/>
    </location>
    <ligand>
        <name>ATP</name>
        <dbReference type="ChEBI" id="CHEBI:30616"/>
    </ligand>
</feature>
<feature type="binding site" evidence="1">
    <location>
        <begin position="219"/>
        <end position="225"/>
    </location>
    <ligand>
        <name>ATP</name>
        <dbReference type="ChEBI" id="CHEBI:30616"/>
    </ligand>
</feature>
<evidence type="ECO:0000255" key="1">
    <source>
        <dbReference type="HAMAP-Rule" id="MF_00456"/>
    </source>
</evidence>
<sequence length="267" mass="28963">MKRNFDSVKRLVIKIGTSSLVLPSGKINLEKIDQLAFVISSLHNKGIEVVLVSSGAMGFGLNVLDLETRPAEVGKQQAVSSVGQVAMMSLYSQVFSHYQTKVSQLLLTRDVVEYPESLANAINAFESLFELGVVPIVNENDAVSVDEMDHATKFGDNDRLSAIVAKVVGADLLIMLSDIDGLFDKNPNVYEDATLRSYVPEITEEILASAGAAGSKFGTGGMMSKIKSAQMVFENQSQMVLMNGENPRDILRVLEGAKIGTLFKQED</sequence>
<proteinExistence type="inferred from homology"/>
<organism>
    <name type="scientific">Streptococcus thermophilus (strain CNRZ 1066)</name>
    <dbReference type="NCBI Taxonomy" id="299768"/>
    <lineage>
        <taxon>Bacteria</taxon>
        <taxon>Bacillati</taxon>
        <taxon>Bacillota</taxon>
        <taxon>Bacilli</taxon>
        <taxon>Lactobacillales</taxon>
        <taxon>Streptococcaceae</taxon>
        <taxon>Streptococcus</taxon>
    </lineage>
</organism>
<reference key="1">
    <citation type="journal article" date="2004" name="Nat. Biotechnol.">
        <title>Complete sequence and comparative genome analysis of the dairy bacterium Streptococcus thermophilus.</title>
        <authorList>
            <person name="Bolotin A."/>
            <person name="Quinquis B."/>
            <person name="Renault P."/>
            <person name="Sorokin A."/>
            <person name="Ehrlich S.D."/>
            <person name="Kulakauskas S."/>
            <person name="Lapidus A."/>
            <person name="Goltsman E."/>
            <person name="Mazur M."/>
            <person name="Pusch G.D."/>
            <person name="Fonstein M."/>
            <person name="Overbeek R."/>
            <person name="Kyprides N."/>
            <person name="Purnelle B."/>
            <person name="Prozzi D."/>
            <person name="Ngui K."/>
            <person name="Masuy D."/>
            <person name="Hancy F."/>
            <person name="Burteau S."/>
            <person name="Boutry M."/>
            <person name="Delcour J."/>
            <person name="Goffeau A."/>
            <person name="Hols P."/>
        </authorList>
    </citation>
    <scope>NUCLEOTIDE SEQUENCE [LARGE SCALE GENOMIC DNA]</scope>
    <source>
        <strain>CNRZ 1066</strain>
    </source>
</reference>
<gene>
    <name evidence="1" type="primary">proB</name>
    <name type="ordered locus">str1711</name>
</gene>
<accession>Q5LY83</accession>
<dbReference type="EC" id="2.7.2.11" evidence="1"/>
<dbReference type="EMBL" id="CP000024">
    <property type="protein sequence ID" value="AAV63231.1"/>
    <property type="molecule type" value="Genomic_DNA"/>
</dbReference>
<dbReference type="RefSeq" id="WP_002948808.1">
    <property type="nucleotide sequence ID" value="NC_006449.1"/>
</dbReference>
<dbReference type="SMR" id="Q5LY83"/>
<dbReference type="GeneID" id="66899449"/>
<dbReference type="KEGG" id="stc:str1711"/>
<dbReference type="HOGENOM" id="CLU_025400_0_2_9"/>
<dbReference type="UniPathway" id="UPA00098">
    <property type="reaction ID" value="UER00359"/>
</dbReference>
<dbReference type="GO" id="GO:0005829">
    <property type="term" value="C:cytosol"/>
    <property type="evidence" value="ECO:0007669"/>
    <property type="project" value="TreeGrafter"/>
</dbReference>
<dbReference type="GO" id="GO:0005524">
    <property type="term" value="F:ATP binding"/>
    <property type="evidence" value="ECO:0007669"/>
    <property type="project" value="UniProtKB-KW"/>
</dbReference>
<dbReference type="GO" id="GO:0004349">
    <property type="term" value="F:glutamate 5-kinase activity"/>
    <property type="evidence" value="ECO:0007669"/>
    <property type="project" value="UniProtKB-UniRule"/>
</dbReference>
<dbReference type="GO" id="GO:0055129">
    <property type="term" value="P:L-proline biosynthetic process"/>
    <property type="evidence" value="ECO:0007669"/>
    <property type="project" value="UniProtKB-UniRule"/>
</dbReference>
<dbReference type="CDD" id="cd04242">
    <property type="entry name" value="AAK_G5K_ProB"/>
    <property type="match status" value="1"/>
</dbReference>
<dbReference type="FunFam" id="3.40.1160.10:FF:000018">
    <property type="entry name" value="Glutamate 5-kinase"/>
    <property type="match status" value="1"/>
</dbReference>
<dbReference type="Gene3D" id="3.40.1160.10">
    <property type="entry name" value="Acetylglutamate kinase-like"/>
    <property type="match status" value="1"/>
</dbReference>
<dbReference type="HAMAP" id="MF_00456">
    <property type="entry name" value="ProB"/>
    <property type="match status" value="1"/>
</dbReference>
<dbReference type="InterPro" id="IPR036393">
    <property type="entry name" value="AceGlu_kinase-like_sf"/>
</dbReference>
<dbReference type="InterPro" id="IPR001048">
    <property type="entry name" value="Asp/Glu/Uridylate_kinase"/>
</dbReference>
<dbReference type="InterPro" id="IPR041739">
    <property type="entry name" value="G5K_ProB"/>
</dbReference>
<dbReference type="InterPro" id="IPR001057">
    <property type="entry name" value="Glu/AcGlu_kinase"/>
</dbReference>
<dbReference type="InterPro" id="IPR011529">
    <property type="entry name" value="Glu_5kinase"/>
</dbReference>
<dbReference type="InterPro" id="IPR005715">
    <property type="entry name" value="Glu_5kinase/COase_Synthase"/>
</dbReference>
<dbReference type="InterPro" id="IPR019797">
    <property type="entry name" value="Glutamate_5-kinase_CS"/>
</dbReference>
<dbReference type="NCBIfam" id="TIGR01027">
    <property type="entry name" value="proB"/>
    <property type="match status" value="1"/>
</dbReference>
<dbReference type="PANTHER" id="PTHR43654">
    <property type="entry name" value="GLUTAMATE 5-KINASE"/>
    <property type="match status" value="1"/>
</dbReference>
<dbReference type="PANTHER" id="PTHR43654:SF1">
    <property type="entry name" value="ISOPENTENYL PHOSPHATE KINASE"/>
    <property type="match status" value="1"/>
</dbReference>
<dbReference type="Pfam" id="PF00696">
    <property type="entry name" value="AA_kinase"/>
    <property type="match status" value="1"/>
</dbReference>
<dbReference type="PIRSF" id="PIRSF000729">
    <property type="entry name" value="GK"/>
    <property type="match status" value="1"/>
</dbReference>
<dbReference type="PRINTS" id="PR00474">
    <property type="entry name" value="GLU5KINASE"/>
</dbReference>
<dbReference type="SUPFAM" id="SSF53633">
    <property type="entry name" value="Carbamate kinase-like"/>
    <property type="match status" value="1"/>
</dbReference>
<dbReference type="PROSITE" id="PS00902">
    <property type="entry name" value="GLUTAMATE_5_KINASE"/>
    <property type="match status" value="1"/>
</dbReference>
<protein>
    <recommendedName>
        <fullName evidence="1">Glutamate 5-kinase</fullName>
        <ecNumber evidence="1">2.7.2.11</ecNumber>
    </recommendedName>
    <alternativeName>
        <fullName evidence="1">Gamma-glutamyl kinase</fullName>
        <shortName evidence="1">GK</shortName>
    </alternativeName>
</protein>
<comment type="function">
    <text evidence="1">Catalyzes the transfer of a phosphate group to glutamate to form L-glutamate 5-phosphate.</text>
</comment>
<comment type="catalytic activity">
    <reaction evidence="1">
        <text>L-glutamate + ATP = L-glutamyl 5-phosphate + ADP</text>
        <dbReference type="Rhea" id="RHEA:14877"/>
        <dbReference type="ChEBI" id="CHEBI:29985"/>
        <dbReference type="ChEBI" id="CHEBI:30616"/>
        <dbReference type="ChEBI" id="CHEBI:58274"/>
        <dbReference type="ChEBI" id="CHEBI:456216"/>
        <dbReference type="EC" id="2.7.2.11"/>
    </reaction>
</comment>
<comment type="pathway">
    <text evidence="1">Amino-acid biosynthesis; L-proline biosynthesis; L-glutamate 5-semialdehyde from L-glutamate: step 1/2.</text>
</comment>
<comment type="subcellular location">
    <subcellularLocation>
        <location evidence="1">Cytoplasm</location>
    </subcellularLocation>
</comment>
<comment type="similarity">
    <text evidence="1">Belongs to the glutamate 5-kinase family.</text>
</comment>
<keyword id="KW-0028">Amino-acid biosynthesis</keyword>
<keyword id="KW-0067">ATP-binding</keyword>
<keyword id="KW-0963">Cytoplasm</keyword>
<keyword id="KW-0418">Kinase</keyword>
<keyword id="KW-0547">Nucleotide-binding</keyword>
<keyword id="KW-0641">Proline biosynthesis</keyword>
<keyword id="KW-0808">Transferase</keyword>